<accession>Q8N1I8</accession>
<organism>
    <name type="scientific">Homo sapiens</name>
    <name type="common">Human</name>
    <dbReference type="NCBI Taxonomy" id="9606"/>
    <lineage>
        <taxon>Eukaryota</taxon>
        <taxon>Metazoa</taxon>
        <taxon>Chordata</taxon>
        <taxon>Craniata</taxon>
        <taxon>Vertebrata</taxon>
        <taxon>Euteleostomi</taxon>
        <taxon>Mammalia</taxon>
        <taxon>Eutheria</taxon>
        <taxon>Euarchontoglires</taxon>
        <taxon>Primates</taxon>
        <taxon>Haplorrhini</taxon>
        <taxon>Catarrhini</taxon>
        <taxon>Hominidae</taxon>
        <taxon>Homo</taxon>
    </lineage>
</organism>
<keyword id="KW-1185">Reference proteome</keyword>
<reference key="1">
    <citation type="journal article" date="2004" name="Nat. Genet.">
        <title>Complete sequencing and characterization of 21,243 full-length human cDNAs.</title>
        <authorList>
            <person name="Ota T."/>
            <person name="Suzuki Y."/>
            <person name="Nishikawa T."/>
            <person name="Otsuki T."/>
            <person name="Sugiyama T."/>
            <person name="Irie R."/>
            <person name="Wakamatsu A."/>
            <person name="Hayashi K."/>
            <person name="Sato H."/>
            <person name="Nagai K."/>
            <person name="Kimura K."/>
            <person name="Makita H."/>
            <person name="Sekine M."/>
            <person name="Obayashi M."/>
            <person name="Nishi T."/>
            <person name="Shibahara T."/>
            <person name="Tanaka T."/>
            <person name="Ishii S."/>
            <person name="Yamamoto J."/>
            <person name="Saito K."/>
            <person name="Kawai Y."/>
            <person name="Isono Y."/>
            <person name="Nakamura Y."/>
            <person name="Nagahari K."/>
            <person name="Murakami K."/>
            <person name="Yasuda T."/>
            <person name="Iwayanagi T."/>
            <person name="Wagatsuma M."/>
            <person name="Shiratori A."/>
            <person name="Sudo H."/>
            <person name="Hosoiri T."/>
            <person name="Kaku Y."/>
            <person name="Kodaira H."/>
            <person name="Kondo H."/>
            <person name="Sugawara M."/>
            <person name="Takahashi M."/>
            <person name="Kanda K."/>
            <person name="Yokoi T."/>
            <person name="Furuya T."/>
            <person name="Kikkawa E."/>
            <person name="Omura Y."/>
            <person name="Abe K."/>
            <person name="Kamihara K."/>
            <person name="Katsuta N."/>
            <person name="Sato K."/>
            <person name="Tanikawa M."/>
            <person name="Yamazaki M."/>
            <person name="Ninomiya K."/>
            <person name="Ishibashi T."/>
            <person name="Yamashita H."/>
            <person name="Murakawa K."/>
            <person name="Fujimori K."/>
            <person name="Tanai H."/>
            <person name="Kimata M."/>
            <person name="Watanabe M."/>
            <person name="Hiraoka S."/>
            <person name="Chiba Y."/>
            <person name="Ishida S."/>
            <person name="Ono Y."/>
            <person name="Takiguchi S."/>
            <person name="Watanabe S."/>
            <person name="Yosida M."/>
            <person name="Hotuta T."/>
            <person name="Kusano J."/>
            <person name="Kanehori K."/>
            <person name="Takahashi-Fujii A."/>
            <person name="Hara H."/>
            <person name="Tanase T.-O."/>
            <person name="Nomura Y."/>
            <person name="Togiya S."/>
            <person name="Komai F."/>
            <person name="Hara R."/>
            <person name="Takeuchi K."/>
            <person name="Arita M."/>
            <person name="Imose N."/>
            <person name="Musashino K."/>
            <person name="Yuuki H."/>
            <person name="Oshima A."/>
            <person name="Sasaki N."/>
            <person name="Aotsuka S."/>
            <person name="Yoshikawa Y."/>
            <person name="Matsunawa H."/>
            <person name="Ichihara T."/>
            <person name="Shiohata N."/>
            <person name="Sano S."/>
            <person name="Moriya S."/>
            <person name="Momiyama H."/>
            <person name="Satoh N."/>
            <person name="Takami S."/>
            <person name="Terashima Y."/>
            <person name="Suzuki O."/>
            <person name="Nakagawa S."/>
            <person name="Senoh A."/>
            <person name="Mizoguchi H."/>
            <person name="Goto Y."/>
            <person name="Shimizu F."/>
            <person name="Wakebe H."/>
            <person name="Hishigaki H."/>
            <person name="Watanabe T."/>
            <person name="Sugiyama A."/>
            <person name="Takemoto M."/>
            <person name="Kawakami B."/>
            <person name="Yamazaki M."/>
            <person name="Watanabe K."/>
            <person name="Kumagai A."/>
            <person name="Itakura S."/>
            <person name="Fukuzumi Y."/>
            <person name="Fujimori Y."/>
            <person name="Komiyama M."/>
            <person name="Tashiro H."/>
            <person name="Tanigami A."/>
            <person name="Fujiwara T."/>
            <person name="Ono T."/>
            <person name="Yamada K."/>
            <person name="Fujii Y."/>
            <person name="Ozaki K."/>
            <person name="Hirao M."/>
            <person name="Ohmori Y."/>
            <person name="Kawabata A."/>
            <person name="Hikiji T."/>
            <person name="Kobatake N."/>
            <person name="Inagaki H."/>
            <person name="Ikema Y."/>
            <person name="Okamoto S."/>
            <person name="Okitani R."/>
            <person name="Kawakami T."/>
            <person name="Noguchi S."/>
            <person name="Itoh T."/>
            <person name="Shigeta K."/>
            <person name="Senba T."/>
            <person name="Matsumura K."/>
            <person name="Nakajima Y."/>
            <person name="Mizuno T."/>
            <person name="Morinaga M."/>
            <person name="Sasaki M."/>
            <person name="Togashi T."/>
            <person name="Oyama M."/>
            <person name="Hata H."/>
            <person name="Watanabe M."/>
            <person name="Komatsu T."/>
            <person name="Mizushima-Sugano J."/>
            <person name="Satoh T."/>
            <person name="Shirai Y."/>
            <person name="Takahashi Y."/>
            <person name="Nakagawa K."/>
            <person name="Okumura K."/>
            <person name="Nagase T."/>
            <person name="Nomura N."/>
            <person name="Kikuchi H."/>
            <person name="Masuho Y."/>
            <person name="Yamashita R."/>
            <person name="Nakai K."/>
            <person name="Yada T."/>
            <person name="Nakamura Y."/>
            <person name="Ohara O."/>
            <person name="Isogai T."/>
            <person name="Sugano S."/>
        </authorList>
    </citation>
    <scope>NUCLEOTIDE SEQUENCE [LARGE SCALE MRNA]</scope>
    <source>
        <tissue>Thymus</tissue>
    </source>
</reference>
<protein>
    <recommendedName>
        <fullName>Putative uncharacterized protein encoded by CACTIN-AS1</fullName>
    </recommendedName>
    <alternativeName>
        <fullName>Cactin antisense RNA 1</fullName>
    </alternativeName>
</protein>
<sequence length="211" mass="22698">MRPEVGREPAALQPRQRPRSDHQLHRSPFTVPPRTPACRSPGPSPPIAVALEVKPQLEDAIGKLAAEAVAVRVFPLAVDDLESDVLVGRPRVEAQDGEILVVGAGLQEVLGRGALVDEVGVEDVELVSLHDLGRWVVKVVVRLVVLVPLEARVHAVEEARLAWPVLVGPQDGGCPGSARTAAGKSFHHLWPQGQWASKPRMNEGTPQCACR</sequence>
<gene>
    <name type="primary">CACTIN-AS1</name>
    <name type="synonym">C19orf29-AS1</name>
    <name type="synonym">C19orf29OS</name>
</gene>
<dbReference type="EMBL" id="AK097999">
    <property type="status" value="NOT_ANNOTATED_CDS"/>
    <property type="molecule type" value="mRNA"/>
</dbReference>
<dbReference type="FunCoup" id="Q8N1I8">
    <property type="interactions" value="1"/>
</dbReference>
<dbReference type="IntAct" id="Q8N1I8">
    <property type="interactions" value="2"/>
</dbReference>
<dbReference type="MINT" id="Q8N1I8"/>
<dbReference type="BioMuta" id="HGNC:31391"/>
<dbReference type="DMDM" id="74750899"/>
<dbReference type="AGR" id="HGNC:31391"/>
<dbReference type="GeneCards" id="CACTIN-AS1"/>
<dbReference type="HGNC" id="HGNC:31391">
    <property type="gene designation" value="CACTIN-AS1"/>
</dbReference>
<dbReference type="neXtProt" id="NX_Q8N1I8"/>
<dbReference type="InParanoid" id="Q8N1I8"/>
<dbReference type="PAN-GO" id="Q8N1I8">
    <property type="GO annotations" value="0 GO annotations based on evolutionary models"/>
</dbReference>
<dbReference type="Pharos" id="Q8N1I8">
    <property type="development level" value="Tdark"/>
</dbReference>
<dbReference type="PRO" id="PR:Q8N1I8"/>
<dbReference type="Proteomes" id="UP000005640">
    <property type="component" value="Unplaced"/>
</dbReference>
<dbReference type="RNAct" id="Q8N1I8">
    <property type="molecule type" value="protein"/>
</dbReference>
<evidence type="ECO:0000256" key="1">
    <source>
        <dbReference type="SAM" id="MobiDB-lite"/>
    </source>
</evidence>
<feature type="chain" id="PRO_0000297561" description="Putative uncharacterized protein encoded by CACTIN-AS1">
    <location>
        <begin position="1"/>
        <end position="211"/>
    </location>
</feature>
<feature type="region of interest" description="Disordered" evidence="1">
    <location>
        <begin position="1"/>
        <end position="43"/>
    </location>
</feature>
<name>CAAS1_HUMAN</name>
<proteinExistence type="evidence at transcript level"/>